<evidence type="ECO:0000250" key="1"/>
<evidence type="ECO:0000305" key="2"/>
<comment type="function">
    <text>DNA-dependent RNA polymerase catalyzes the transcription of DNA into RNA using the four ribonucleoside triphosphates as substrates.</text>
</comment>
<comment type="catalytic activity">
    <reaction>
        <text>RNA(n) + a ribonucleoside 5'-triphosphate = RNA(n+1) + diphosphate</text>
        <dbReference type="Rhea" id="RHEA:21248"/>
        <dbReference type="Rhea" id="RHEA-COMP:14527"/>
        <dbReference type="Rhea" id="RHEA-COMP:17342"/>
        <dbReference type="ChEBI" id="CHEBI:33019"/>
        <dbReference type="ChEBI" id="CHEBI:61557"/>
        <dbReference type="ChEBI" id="CHEBI:140395"/>
        <dbReference type="EC" id="2.7.7.6"/>
    </reaction>
</comment>
<comment type="subunit">
    <text evidence="1">In plastids the minimal PEP RNA polymerase catalytic core is composed of four subunits: alpha, beta, beta', and beta''. When a (nuclear-encoded) sigma factor is associated with the core the holoenzyme is formed, which can initiate transcription (By similarity).</text>
</comment>
<comment type="subcellular location">
    <subcellularLocation>
        <location>Plastid</location>
        <location>Chloroplast</location>
    </subcellularLocation>
</comment>
<comment type="domain">
    <text evidence="1">The N-terminal domain is essential for RNAP assembly and basal transcription, whereas the C-terminal domain is involved in interaction with transcriptional regulators and with upstream promoter elements.</text>
</comment>
<comment type="similarity">
    <text evidence="2">Belongs to the RNA polymerase alpha chain family.</text>
</comment>
<geneLocation type="chloroplast"/>
<reference key="1">
    <citation type="journal article" date="2002" name="Plant Cell">
        <title>The Chlamydomonas reinhardtii plastid chromosome: islands of genes in a sea of repeats.</title>
        <authorList>
            <person name="Maul J.E."/>
            <person name="Lilly J.W."/>
            <person name="Cui L."/>
            <person name="dePamphilis C.W."/>
            <person name="Miller W."/>
            <person name="Harris E.H."/>
            <person name="Stern D.B."/>
        </authorList>
    </citation>
    <scope>NUCLEOTIDE SEQUENCE [LARGE SCALE GENOMIC DNA]</scope>
    <scope>IDENTIFICATION</scope>
    <scope>COMPLETE PLASTID GENOME</scope>
</reference>
<reference key="2">
    <citation type="journal article" date="2009" name="BMC Evol. Biol.">
        <title>Nucleotide diversity of the Chlamydomonas reinhardtii plastid genome: addressing the mutational-hazard hypothesis.</title>
        <authorList>
            <person name="Smith D.R."/>
            <person name="Lee R.W."/>
        </authorList>
    </citation>
    <scope>NUCLEOTIDE SEQUENCE [LARGE SCALE GENOMIC DNA]</scope>
    <source>
        <strain>CC-503</strain>
    </source>
</reference>
<accession>Q8HUH2</accession>
<accession>B7U1H5</accession>
<gene>
    <name type="primary">rpoA</name>
</gene>
<name>RPOA_CHLRE</name>
<protein>
    <recommendedName>
        <fullName>DNA-directed RNA polymerase subunit alpha</fullName>
        <shortName>PEP</shortName>
        <ecNumber>2.7.7.6</ecNumber>
    </recommendedName>
    <alternativeName>
        <fullName>Plastid-encoded RNA polymerase subunit alpha</fullName>
        <shortName>RNA polymerase subunit alpha</shortName>
    </alternativeName>
</protein>
<feature type="chain" id="PRO_0000175446" description="DNA-directed RNA polymerase subunit alpha">
    <location>
        <begin position="1"/>
        <end position="550"/>
    </location>
</feature>
<feature type="region of interest" description="Alpha N-terminal domain (alpha-NTD)" evidence="1">
    <location>
        <begin position="1"/>
        <end position="333"/>
    </location>
</feature>
<feature type="region of interest" description="Insert">
    <location>
        <begin position="185"/>
        <end position="258"/>
    </location>
</feature>
<feature type="region of interest" description="Alpha C-terminal domain (alpha-CTD)" evidence="1">
    <location>
        <begin position="378"/>
        <end position="550"/>
    </location>
</feature>
<feature type="sequence variant" description="In strain: CC-503.">
    <original>S</original>
    <variation>T</variation>
    <location>
        <position position="449"/>
    </location>
</feature>
<feature type="sequence variant" description="In strain: CC-503.">
    <original>RK</original>
    <variation>KN</variation>
    <location>
        <begin position="548"/>
        <end position="549"/>
    </location>
</feature>
<organism>
    <name type="scientific">Chlamydomonas reinhardtii</name>
    <name type="common">Chlamydomonas smithii</name>
    <dbReference type="NCBI Taxonomy" id="3055"/>
    <lineage>
        <taxon>Eukaryota</taxon>
        <taxon>Viridiplantae</taxon>
        <taxon>Chlorophyta</taxon>
        <taxon>core chlorophytes</taxon>
        <taxon>Chlorophyceae</taxon>
        <taxon>CS clade</taxon>
        <taxon>Chlamydomonadales</taxon>
        <taxon>Chlamydomonadaceae</taxon>
        <taxon>Chlamydomonas</taxon>
    </lineage>
</organism>
<keyword id="KW-0150">Chloroplast</keyword>
<keyword id="KW-0240">DNA-directed RNA polymerase</keyword>
<keyword id="KW-0548">Nucleotidyltransferase</keyword>
<keyword id="KW-0934">Plastid</keyword>
<keyword id="KW-1185">Reference proteome</keyword>
<keyword id="KW-0804">Transcription</keyword>
<keyword id="KW-0808">Transferase</keyword>
<sequence>MTIYPNLKKIMTKTQSTDFFIACKESRIENNTNFYGCFYLGPFDESLSQTLANDLRRTLLSELTGLAITSIEIEGVLHKFSTLTGMKEPVLDLICNLQNIVLRKETISSTNMNYRATKKTYIGFLSVNGPRVIKAADLKLPAGLQCVDPNQYIATLAEDGFLNMKFNINEGKNYIKQKPYNLDVTTLKKRNILLQNFKNKIGLTALKNKQLMSTTMEGKPLLSNSDNLRFKKSFKRMLTSPNQSLKNKTSLGHDTVSNPIPLDAVFMPVTKINCIIEENNVYSDFSTDPSLEFSTHLVPSLTTQTNLRQESTHKFVNKANSLLQENNLFRSEKVYLPNIYIPEGEGDALSLKGVSPYSDFKTFLSTLNYNSLYQTSLFLNQSLGQNKLLPWQANTLFFDVTNFADSQSNDVNMNMDLAGDKTSVQKIHSTGISNTDAQLNKLSLTKIKSFLGSSDKLQNKTYQSFLQPKYASSNLRTLLTQRSLQKNQSVFMHSFLDDQAKHKELTSNTLRANKFQVMKTVVSIPPKTFKTNPINTFHNQSLTFEYARKF</sequence>
<dbReference type="EC" id="2.7.7.6"/>
<dbReference type="EMBL" id="AF541867">
    <property type="protein sequence ID" value="AAN17816.1"/>
    <property type="molecule type" value="Genomic_DNA"/>
</dbReference>
<dbReference type="EMBL" id="FJ423446">
    <property type="protein sequence ID" value="ACJ50122.1"/>
    <property type="molecule type" value="Genomic_DNA"/>
</dbReference>
<dbReference type="EMBL" id="BK000554">
    <property type="protein sequence ID" value="DAA00934.1"/>
    <property type="molecule type" value="Genomic_DNA"/>
</dbReference>
<dbReference type="RefSeq" id="NP_958389.1">
    <property type="nucleotide sequence ID" value="NC_005353.1"/>
</dbReference>
<dbReference type="SMR" id="Q8HUH2"/>
<dbReference type="STRING" id="3055.Q8HUH2"/>
<dbReference type="PaxDb" id="3055-DAA00934"/>
<dbReference type="GeneID" id="2717004"/>
<dbReference type="KEGG" id="cre:ChreCp033"/>
<dbReference type="eggNOG" id="ENOG502QRS7">
    <property type="taxonomic scope" value="Eukaryota"/>
</dbReference>
<dbReference type="HOGENOM" id="CLU_495556_0_0_1"/>
<dbReference type="InParanoid" id="Q8HUH2"/>
<dbReference type="Proteomes" id="UP000006906">
    <property type="component" value="Chloroplast"/>
</dbReference>
<dbReference type="GO" id="GO:0009507">
    <property type="term" value="C:chloroplast"/>
    <property type="evidence" value="ECO:0007669"/>
    <property type="project" value="UniProtKB-SubCell"/>
</dbReference>
<dbReference type="GO" id="GO:0000428">
    <property type="term" value="C:DNA-directed RNA polymerase complex"/>
    <property type="evidence" value="ECO:0007669"/>
    <property type="project" value="UniProtKB-KW"/>
</dbReference>
<dbReference type="GO" id="GO:0005739">
    <property type="term" value="C:mitochondrion"/>
    <property type="evidence" value="ECO:0007669"/>
    <property type="project" value="GOC"/>
</dbReference>
<dbReference type="GO" id="GO:0003899">
    <property type="term" value="F:DNA-directed RNA polymerase activity"/>
    <property type="evidence" value="ECO:0007669"/>
    <property type="project" value="UniProtKB-EC"/>
</dbReference>
<dbReference type="GO" id="GO:0046983">
    <property type="term" value="F:protein dimerization activity"/>
    <property type="evidence" value="ECO:0007669"/>
    <property type="project" value="InterPro"/>
</dbReference>
<dbReference type="GO" id="GO:0006351">
    <property type="term" value="P:DNA-templated transcription"/>
    <property type="evidence" value="ECO:0007669"/>
    <property type="project" value="InterPro"/>
</dbReference>
<dbReference type="CDD" id="cd06928">
    <property type="entry name" value="RNAP_alpha_NTD"/>
    <property type="match status" value="1"/>
</dbReference>
<dbReference type="Gene3D" id="2.170.120.12">
    <property type="entry name" value="DNA-directed RNA polymerase, insert domain"/>
    <property type="match status" value="1"/>
</dbReference>
<dbReference type="InterPro" id="IPR011262">
    <property type="entry name" value="DNA-dir_RNA_pol_insert"/>
</dbReference>
<dbReference type="InterPro" id="IPR011263">
    <property type="entry name" value="DNA-dir_RNA_pol_RpoA/D/Rpb3"/>
</dbReference>
<dbReference type="InterPro" id="IPR036603">
    <property type="entry name" value="RBP11-like"/>
</dbReference>
<dbReference type="InterPro" id="IPR036643">
    <property type="entry name" value="RNApol_insert_sf"/>
</dbReference>
<dbReference type="Pfam" id="PF01000">
    <property type="entry name" value="RNA_pol_A_bac"/>
    <property type="match status" value="1"/>
</dbReference>
<dbReference type="SMART" id="SM00662">
    <property type="entry name" value="RPOLD"/>
    <property type="match status" value="1"/>
</dbReference>
<dbReference type="SUPFAM" id="SSF56553">
    <property type="entry name" value="Insert subdomain of RNA polymerase alpha subunit"/>
    <property type="match status" value="1"/>
</dbReference>
<dbReference type="SUPFAM" id="SSF55257">
    <property type="entry name" value="RBP11-like subunits of RNA polymerase"/>
    <property type="match status" value="1"/>
</dbReference>
<proteinExistence type="evidence at transcript level"/>